<dbReference type="EMBL" id="CP000003">
    <property type="protein sequence ID" value="AAT86260.1"/>
    <property type="molecule type" value="Genomic_DNA"/>
</dbReference>
<dbReference type="RefSeq" id="WP_002986587.1">
    <property type="nucleotide sequence ID" value="NC_006086.1"/>
</dbReference>
<dbReference type="SMR" id="Q5XEA3"/>
<dbReference type="KEGG" id="spa:M6_Spy0125"/>
<dbReference type="HOGENOM" id="CLU_142321_1_0_9"/>
<dbReference type="PHI-base" id="PHI:3487"/>
<dbReference type="Proteomes" id="UP000001167">
    <property type="component" value="Chromosome"/>
</dbReference>
<dbReference type="GO" id="GO:0003677">
    <property type="term" value="F:DNA binding"/>
    <property type="evidence" value="ECO:0007669"/>
    <property type="project" value="UniProtKB-KW"/>
</dbReference>
<dbReference type="GO" id="GO:0003700">
    <property type="term" value="F:DNA-binding transcription factor activity"/>
    <property type="evidence" value="ECO:0007669"/>
    <property type="project" value="InterPro"/>
</dbReference>
<dbReference type="GO" id="GO:0008270">
    <property type="term" value="F:zinc ion binding"/>
    <property type="evidence" value="ECO:0007669"/>
    <property type="project" value="InterPro"/>
</dbReference>
<dbReference type="CDD" id="cd00090">
    <property type="entry name" value="HTH_ARSR"/>
    <property type="match status" value="1"/>
</dbReference>
<dbReference type="Gene3D" id="6.10.140.1680">
    <property type="match status" value="1"/>
</dbReference>
<dbReference type="Gene3D" id="6.10.250.2360">
    <property type="match status" value="1"/>
</dbReference>
<dbReference type="Gene3D" id="1.10.10.10">
    <property type="entry name" value="Winged helix-like DNA-binding domain superfamily/Winged helix DNA-binding domain"/>
    <property type="match status" value="1"/>
</dbReference>
<dbReference type="InterPro" id="IPR047894">
    <property type="entry name" value="AdcR-like"/>
</dbReference>
<dbReference type="InterPro" id="IPR011991">
    <property type="entry name" value="ArsR-like_HTH"/>
</dbReference>
<dbReference type="InterPro" id="IPR000835">
    <property type="entry name" value="HTH_MarR-typ"/>
</dbReference>
<dbReference type="InterPro" id="IPR052067">
    <property type="entry name" value="Metal_resp_HTH_trans_reg"/>
</dbReference>
<dbReference type="InterPro" id="IPR036388">
    <property type="entry name" value="WH-like_DNA-bd_sf"/>
</dbReference>
<dbReference type="InterPro" id="IPR036390">
    <property type="entry name" value="WH_DNA-bd_sf"/>
</dbReference>
<dbReference type="NCBIfam" id="NF038251">
    <property type="entry name" value="AdcR_fam_Zn_TF"/>
    <property type="match status" value="1"/>
</dbReference>
<dbReference type="PANTHER" id="PTHR35790">
    <property type="entry name" value="HTH-TYPE TRANSCRIPTIONAL REGULATOR PCHR"/>
    <property type="match status" value="1"/>
</dbReference>
<dbReference type="PANTHER" id="PTHR35790:SF4">
    <property type="entry name" value="HTH-TYPE TRANSCRIPTIONAL REGULATOR PCHR"/>
    <property type="match status" value="1"/>
</dbReference>
<dbReference type="Pfam" id="PF01047">
    <property type="entry name" value="MarR"/>
    <property type="match status" value="1"/>
</dbReference>
<dbReference type="SMART" id="SM00347">
    <property type="entry name" value="HTH_MARR"/>
    <property type="match status" value="1"/>
</dbReference>
<dbReference type="SUPFAM" id="SSF46785">
    <property type="entry name" value="Winged helix' DNA-binding domain"/>
    <property type="match status" value="1"/>
</dbReference>
<dbReference type="PROSITE" id="PS50995">
    <property type="entry name" value="HTH_MARR_2"/>
    <property type="match status" value="1"/>
</dbReference>
<reference evidence="5" key="1">
    <citation type="journal article" date="2004" name="J. Infect. Dis.">
        <title>Progress toward characterization of the group A Streptococcus metagenome: complete genome sequence of a macrolide-resistant serotype M6 strain.</title>
        <authorList>
            <person name="Banks D.J."/>
            <person name="Porcella S.F."/>
            <person name="Barbian K.D."/>
            <person name="Beres S.B."/>
            <person name="Philips L.E."/>
            <person name="Voyich J.M."/>
            <person name="DeLeo F.R."/>
            <person name="Martin J.M."/>
            <person name="Somerville G.A."/>
            <person name="Musser J.M."/>
        </authorList>
    </citation>
    <scope>NUCLEOTIDE SEQUENCE [LARGE SCALE GENOMIC DNA]</scope>
    <source>
        <strain>ATCC BAA-946 / MGAS10394</strain>
    </source>
</reference>
<reference evidence="4" key="2">
    <citation type="submission" date="2000-05" db="UniProtKB">
        <title>Two-dimensional gel electrophoresis map of Streptococcus pyogenes proteins.</title>
        <authorList>
            <person name="Hogan D.A."/>
            <person name="Du P."/>
            <person name="Stevenson T.I."/>
            <person name="Whitton M."/>
            <person name="Kilby G.W."/>
            <person name="Rogers J."/>
            <person name="VanBogelen R.A."/>
        </authorList>
    </citation>
    <scope>PROTEIN SEQUENCE OF 7-18; 36-51; 60-70 AND 130-136</scope>
    <scope>MASS SPECTROMETRY</scope>
    <source>
        <strain evidence="3">JRS4 / Serotype M6</strain>
    </source>
</reference>
<keyword id="KW-0903">Direct protein sequencing</keyword>
<keyword id="KW-0238">DNA-binding</keyword>
<keyword id="KW-0479">Metal-binding</keyword>
<keyword id="KW-0804">Transcription</keyword>
<keyword id="KW-0805">Transcription regulation</keyword>
<keyword id="KW-0862">Zinc</keyword>
<name>ADCR_STRP6</name>
<protein>
    <recommendedName>
        <fullName>Transcriptional regulator AdcR</fullName>
    </recommendedName>
</protein>
<gene>
    <name type="primary">adcR</name>
    <name type="ordered locus">M6_Spy0125</name>
</gene>
<accession>Q5XEA3</accession>
<accession>P82546</accession>
<organism>
    <name type="scientific">Streptococcus pyogenes serotype M6 (strain ATCC BAA-946 / MGAS10394)</name>
    <dbReference type="NCBI Taxonomy" id="286636"/>
    <lineage>
        <taxon>Bacteria</taxon>
        <taxon>Bacillati</taxon>
        <taxon>Bacillota</taxon>
        <taxon>Bacilli</taxon>
        <taxon>Lactobacillales</taxon>
        <taxon>Streptococcaceae</taxon>
        <taxon>Streptococcus</taxon>
    </lineage>
</organism>
<proteinExistence type="evidence at protein level"/>
<sequence>MGTLEKKLDNLVNTILLKAENQHELLFGACQSDVKLTNTQEHILMLLSQQRLTNTDLAKALNISQAAVTKAIKSLVKQDMLAGTKDTVDARVTYFELTELAKPIASEHTHHHDETLNVYNRLLQKFSAKELEIVDKFVTVFAEELEG</sequence>
<evidence type="ECO:0000250" key="1"/>
<evidence type="ECO:0000255" key="2">
    <source>
        <dbReference type="PROSITE-ProRule" id="PRU00345"/>
    </source>
</evidence>
<evidence type="ECO:0000269" key="3">
    <source ref="2"/>
</evidence>
<evidence type="ECO:0000305" key="4"/>
<evidence type="ECO:0000312" key="5">
    <source>
        <dbReference type="EMBL" id="AAT86260.1"/>
    </source>
</evidence>
<comment type="function">
    <text evidence="1">Zinc-responsive regulator.</text>
</comment>
<comment type="activity regulation">
    <text evidence="1">Zinc acts as a coregulator and is required for DNA-binding activity.</text>
</comment>
<comment type="subunit">
    <text evidence="1">Homodimer.</text>
</comment>
<comment type="mass spectrometry"/>
<feature type="chain" id="PRO_0000259405" description="Transcriptional regulator AdcR">
    <location>
        <begin position="1"/>
        <end position="147"/>
    </location>
</feature>
<feature type="domain" description="HTH marR-type" evidence="2">
    <location>
        <begin position="1"/>
        <end position="143"/>
    </location>
</feature>
<feature type="DNA-binding region" description="H-T-H motif" evidence="2">
    <location>
        <begin position="54"/>
        <end position="77"/>
    </location>
</feature>
<feature type="binding site" evidence="1">
    <location>
        <position position="24"/>
    </location>
    <ligand>
        <name>Zn(2+)</name>
        <dbReference type="ChEBI" id="CHEBI:29105"/>
        <label>1</label>
    </ligand>
</feature>
<feature type="binding site" evidence="1">
    <location>
        <position position="30"/>
    </location>
    <ligand>
        <name>Zn(2+)</name>
        <dbReference type="ChEBI" id="CHEBI:29105"/>
        <label>2</label>
    </ligand>
</feature>
<feature type="binding site" evidence="1">
    <location>
        <position position="41"/>
    </location>
    <ligand>
        <name>Zn(2+)</name>
        <dbReference type="ChEBI" id="CHEBI:29105"/>
        <label>2</label>
    </ligand>
</feature>
<feature type="binding site" evidence="1">
    <location>
        <position position="42"/>
    </location>
    <ligand>
        <name>Zn(2+)</name>
        <dbReference type="ChEBI" id="CHEBI:29105"/>
        <label>1</label>
    </ligand>
</feature>
<feature type="binding site" evidence="1">
    <location>
        <position position="107"/>
    </location>
    <ligand>
        <name>Zn(2+)</name>
        <dbReference type="ChEBI" id="CHEBI:29105"/>
        <label>2</label>
    </ligand>
</feature>
<feature type="binding site" evidence="1">
    <location>
        <position position="108"/>
    </location>
    <ligand>
        <name>Zn(2+)</name>
        <dbReference type="ChEBI" id="CHEBI:29105"/>
        <label>1</label>
    </ligand>
</feature>
<feature type="binding site" evidence="1">
    <location>
        <position position="112"/>
    </location>
    <ligand>
        <name>Zn(2+)</name>
        <dbReference type="ChEBI" id="CHEBI:29105"/>
        <label>1</label>
    </ligand>
</feature>